<name>CTAA_NOVAD</name>
<keyword id="KW-1003">Cell membrane</keyword>
<keyword id="KW-0350">Heme biosynthesis</keyword>
<keyword id="KW-0408">Iron</keyword>
<keyword id="KW-0472">Membrane</keyword>
<keyword id="KW-0479">Metal-binding</keyword>
<keyword id="KW-0560">Oxidoreductase</keyword>
<keyword id="KW-1185">Reference proteome</keyword>
<keyword id="KW-0812">Transmembrane</keyword>
<keyword id="KW-1133">Transmembrane helix</keyword>
<protein>
    <recommendedName>
        <fullName evidence="1">Heme A synthase</fullName>
        <shortName evidence="1">HAS</shortName>
        <ecNumber evidence="1">1.17.99.9</ecNumber>
    </recommendedName>
    <alternativeName>
        <fullName evidence="1">Cytochrome aa3-controlling protein</fullName>
    </alternativeName>
</protein>
<dbReference type="EC" id="1.17.99.9" evidence="1"/>
<dbReference type="EMBL" id="CP000248">
    <property type="protein sequence ID" value="ABD27723.1"/>
    <property type="molecule type" value="Genomic_DNA"/>
</dbReference>
<dbReference type="RefSeq" id="WP_011446925.1">
    <property type="nucleotide sequence ID" value="NC_007794.1"/>
</dbReference>
<dbReference type="SMR" id="Q2G350"/>
<dbReference type="STRING" id="279238.Saro_3288"/>
<dbReference type="KEGG" id="nar:Saro_3288"/>
<dbReference type="eggNOG" id="COG1612">
    <property type="taxonomic scope" value="Bacteria"/>
</dbReference>
<dbReference type="HOGENOM" id="CLU_017627_0_0_5"/>
<dbReference type="UniPathway" id="UPA00269">
    <property type="reaction ID" value="UER00713"/>
</dbReference>
<dbReference type="Proteomes" id="UP000009134">
    <property type="component" value="Chromosome"/>
</dbReference>
<dbReference type="GO" id="GO:0005886">
    <property type="term" value="C:plasma membrane"/>
    <property type="evidence" value="ECO:0007669"/>
    <property type="project" value="UniProtKB-SubCell"/>
</dbReference>
<dbReference type="GO" id="GO:0046872">
    <property type="term" value="F:metal ion binding"/>
    <property type="evidence" value="ECO:0007669"/>
    <property type="project" value="UniProtKB-KW"/>
</dbReference>
<dbReference type="GO" id="GO:0016653">
    <property type="term" value="F:oxidoreductase activity, acting on NAD(P)H, heme protein as acceptor"/>
    <property type="evidence" value="ECO:0007669"/>
    <property type="project" value="InterPro"/>
</dbReference>
<dbReference type="GO" id="GO:0006784">
    <property type="term" value="P:heme A biosynthetic process"/>
    <property type="evidence" value="ECO:0007669"/>
    <property type="project" value="UniProtKB-UniRule"/>
</dbReference>
<dbReference type="HAMAP" id="MF_01665">
    <property type="entry name" value="HemeA_synth_type2"/>
    <property type="match status" value="1"/>
</dbReference>
<dbReference type="InterPro" id="IPR003780">
    <property type="entry name" value="COX15/CtaA_fam"/>
</dbReference>
<dbReference type="InterPro" id="IPR023754">
    <property type="entry name" value="HemeA_Synthase_type2"/>
</dbReference>
<dbReference type="PANTHER" id="PTHR23289">
    <property type="entry name" value="CYTOCHROME C OXIDASE ASSEMBLY PROTEIN COX15"/>
    <property type="match status" value="1"/>
</dbReference>
<dbReference type="PANTHER" id="PTHR23289:SF2">
    <property type="entry name" value="CYTOCHROME C OXIDASE ASSEMBLY PROTEIN COX15 HOMOLOG"/>
    <property type="match status" value="1"/>
</dbReference>
<dbReference type="Pfam" id="PF02628">
    <property type="entry name" value="COX15-CtaA"/>
    <property type="match status" value="1"/>
</dbReference>
<comment type="function">
    <text evidence="1">Catalyzes the conversion of heme O to heme A by two successive hydroxylations of the methyl group at C8. The first hydroxylation forms heme I, the second hydroxylation results in an unstable dihydroxymethyl group, which spontaneously dehydrates, resulting in the formyl group of heme A.</text>
</comment>
<comment type="catalytic activity">
    <reaction evidence="1">
        <text>Fe(II)-heme o + 2 A + H2O = Fe(II)-heme a + 2 AH2</text>
        <dbReference type="Rhea" id="RHEA:63388"/>
        <dbReference type="ChEBI" id="CHEBI:13193"/>
        <dbReference type="ChEBI" id="CHEBI:15377"/>
        <dbReference type="ChEBI" id="CHEBI:17499"/>
        <dbReference type="ChEBI" id="CHEBI:60530"/>
        <dbReference type="ChEBI" id="CHEBI:61715"/>
        <dbReference type="EC" id="1.17.99.9"/>
    </reaction>
    <physiologicalReaction direction="left-to-right" evidence="1">
        <dbReference type="Rhea" id="RHEA:63389"/>
    </physiologicalReaction>
</comment>
<comment type="cofactor">
    <cofactor evidence="1">
        <name>heme b</name>
        <dbReference type="ChEBI" id="CHEBI:60344"/>
    </cofactor>
</comment>
<comment type="pathway">
    <text evidence="1">Porphyrin-containing compound metabolism; heme A biosynthesis; heme A from heme O: step 1/1.</text>
</comment>
<comment type="subunit">
    <text evidence="1">Interacts with CtaB.</text>
</comment>
<comment type="subcellular location">
    <subcellularLocation>
        <location evidence="1">Cell membrane</location>
        <topology evidence="1">Multi-pass membrane protein</topology>
    </subcellularLocation>
</comment>
<comment type="similarity">
    <text evidence="1">Belongs to the COX15/CtaA family. Type 2 subfamily.</text>
</comment>
<sequence>MSASPSPSTRADALALARWLFVVAFMVVAIVAVGGITRLTESGVSITEWKPVAGTLPPITDAQWQAEFDAYRQTPQFQLVNGPAGMTLATYKFIFFWEWVHRLLARTIGLVFAAPLAWFWIKRRIPEGYKPRLVALLALGALQGAVGWWMVKSGIVNDVKVSHFRLATHLLVALFTLGGLVWTALDLVALSKGEARSRLRGIGLLALAMLVLQLFYGALVAGLRAGTSAGGGWFNWDAWPLMQGSLYPDGVDWATGAVHALLSDVFLVHFIHRWWAWAVVAVLVVVARKLRKTNRKASIVLHSVFGTQVLLGIFTVWSGVALWIAVLHQFVGALLVAATTWSAHLLGARR</sequence>
<gene>
    <name evidence="1" type="primary">ctaA</name>
    <name type="ordered locus">Saro_3288</name>
</gene>
<organism>
    <name type="scientific">Novosphingobium aromaticivorans (strain ATCC 700278 / DSM 12444 / CCUG 56034 / CIP 105152 / NBRC 16084 / F199)</name>
    <dbReference type="NCBI Taxonomy" id="279238"/>
    <lineage>
        <taxon>Bacteria</taxon>
        <taxon>Pseudomonadati</taxon>
        <taxon>Pseudomonadota</taxon>
        <taxon>Alphaproteobacteria</taxon>
        <taxon>Sphingomonadales</taxon>
        <taxon>Sphingomonadaceae</taxon>
        <taxon>Novosphingobium</taxon>
    </lineage>
</organism>
<evidence type="ECO:0000255" key="1">
    <source>
        <dbReference type="HAMAP-Rule" id="MF_01665"/>
    </source>
</evidence>
<feature type="chain" id="PRO_0000349054" description="Heme A synthase">
    <location>
        <begin position="1"/>
        <end position="350"/>
    </location>
</feature>
<feature type="transmembrane region" description="Helical" evidence="1">
    <location>
        <begin position="16"/>
        <end position="36"/>
    </location>
</feature>
<feature type="transmembrane region" description="Helical" evidence="1">
    <location>
        <begin position="77"/>
        <end position="97"/>
    </location>
</feature>
<feature type="transmembrane region" description="Helical" evidence="1">
    <location>
        <begin position="101"/>
        <end position="121"/>
    </location>
</feature>
<feature type="transmembrane region" description="Helical" evidence="1">
    <location>
        <begin position="136"/>
        <end position="156"/>
    </location>
</feature>
<feature type="transmembrane region" description="Helical" evidence="1">
    <location>
        <begin position="170"/>
        <end position="190"/>
    </location>
</feature>
<feature type="transmembrane region" description="Helical" evidence="1">
    <location>
        <begin position="201"/>
        <end position="221"/>
    </location>
</feature>
<feature type="transmembrane region" description="Helical" evidence="1">
    <location>
        <begin position="265"/>
        <end position="285"/>
    </location>
</feature>
<feature type="transmembrane region" description="Helical" evidence="1">
    <location>
        <begin position="299"/>
        <end position="321"/>
    </location>
</feature>
<feature type="binding site" description="axial binding residue" evidence="1">
    <location>
        <position position="272"/>
    </location>
    <ligand>
        <name>heme</name>
        <dbReference type="ChEBI" id="CHEBI:30413"/>
    </ligand>
    <ligandPart>
        <name>Fe</name>
        <dbReference type="ChEBI" id="CHEBI:18248"/>
    </ligandPart>
</feature>
<feature type="binding site" description="axial binding residue" evidence="1">
    <location>
        <position position="328"/>
    </location>
    <ligand>
        <name>heme</name>
        <dbReference type="ChEBI" id="CHEBI:30413"/>
    </ligand>
    <ligandPart>
        <name>Fe</name>
        <dbReference type="ChEBI" id="CHEBI:18248"/>
    </ligandPart>
</feature>
<reference key="1">
    <citation type="submission" date="2006-01" db="EMBL/GenBank/DDBJ databases">
        <title>Complete sequence of Novosphingobium aromaticivorans DSM 12444.</title>
        <authorList>
            <consortium name="US DOE Joint Genome Institute"/>
            <person name="Copeland A."/>
            <person name="Lucas S."/>
            <person name="Lapidus A."/>
            <person name="Barry K."/>
            <person name="Detter J.C."/>
            <person name="Glavina T."/>
            <person name="Hammon N."/>
            <person name="Israni S."/>
            <person name="Pitluck S."/>
            <person name="Chain P."/>
            <person name="Malfatti S."/>
            <person name="Shin M."/>
            <person name="Vergez L."/>
            <person name="Schmutz J."/>
            <person name="Larimer F."/>
            <person name="Land M."/>
            <person name="Kyrpides N."/>
            <person name="Ivanova N."/>
            <person name="Fredrickson J."/>
            <person name="Balkwill D."/>
            <person name="Romine M.F."/>
            <person name="Richardson P."/>
        </authorList>
    </citation>
    <scope>NUCLEOTIDE SEQUENCE [LARGE SCALE GENOMIC DNA]</scope>
    <source>
        <strain>ATCC 700278 / DSM 12444 / CCUG 56034 / CIP 105152 / NBRC 16084 / F199</strain>
    </source>
</reference>
<proteinExistence type="inferred from homology"/>
<accession>Q2G350</accession>